<sequence>MKVLIGSDKSGFGLKEEVKAYLAGKGYEMTDCGTLDPEQPKPFFEAAPIAAQKIQSGEFERAILICGTGMGMAIVANKFEGVYAACCESTYAAEKCRAINDANILTMGGWIIAGILGCEMAETFLTTGFTENLEEWRQEFLKGAKQKVGAIEESIYRKG</sequence>
<gene>
    <name evidence="3" type="primary">sqwI</name>
    <name evidence="5" type="ORF">HMPREF1141_0617</name>
</gene>
<comment type="function">
    <text evidence="2">Part of the sulfo-TK pathway, a D-sulfoquinovose degradation pathway that produces 2-hydroxyethane-1-sulfonate (isethionate) (Ref.2). Catalyzes the isomerization of 4-deoxy-4-sulfo-D-erythrose (SE) to 4-deoxy-4-sulfo-D-erythrulose (SEu) (Ref.2).</text>
</comment>
<comment type="catalytic activity">
    <reaction evidence="2">
        <text>4-deoxy-4-sulfo-D-erythrose = 4-deoxy-4-sulfo-D-erythrulose</text>
        <dbReference type="Rhea" id="RHEA:70807"/>
        <dbReference type="ChEBI" id="CHEBI:189857"/>
        <dbReference type="ChEBI" id="CHEBI:190015"/>
        <dbReference type="EC" id="5.3.1.37"/>
    </reaction>
    <physiologicalReaction direction="left-to-right" evidence="2">
        <dbReference type="Rhea" id="RHEA:70808"/>
    </physiologicalReaction>
</comment>
<comment type="similarity">
    <text evidence="4">Belongs to the LacAB/RpiB family.</text>
</comment>
<dbReference type="EC" id="5.3.1.37" evidence="2"/>
<dbReference type="EMBL" id="AKFU01000044">
    <property type="protein sequence ID" value="EJF39089.1"/>
    <property type="molecule type" value="Genomic_DNA"/>
</dbReference>
<dbReference type="RefSeq" id="WP_009065218.1">
    <property type="nucleotide sequence ID" value="NZ_AKFU01000044.1"/>
</dbReference>
<dbReference type="SMR" id="J0MXJ0"/>
<dbReference type="STRING" id="1105031.HMPREF1141_0617"/>
<dbReference type="PATRIC" id="fig|1105031.3.peg.2809"/>
<dbReference type="eggNOG" id="COG0698">
    <property type="taxonomic scope" value="Bacteria"/>
</dbReference>
<dbReference type="BioCyc" id="MetaCyc:MONOMER-21938"/>
<dbReference type="Proteomes" id="UP000004073">
    <property type="component" value="Unassembled WGS sequence"/>
</dbReference>
<dbReference type="GO" id="GO:0004751">
    <property type="term" value="F:ribose-5-phosphate isomerase activity"/>
    <property type="evidence" value="ECO:0007669"/>
    <property type="project" value="TreeGrafter"/>
</dbReference>
<dbReference type="GO" id="GO:0019316">
    <property type="term" value="P:D-allose catabolic process"/>
    <property type="evidence" value="ECO:0007669"/>
    <property type="project" value="TreeGrafter"/>
</dbReference>
<dbReference type="GO" id="GO:0009052">
    <property type="term" value="P:pentose-phosphate shunt, non-oxidative branch"/>
    <property type="evidence" value="ECO:0007669"/>
    <property type="project" value="TreeGrafter"/>
</dbReference>
<dbReference type="Gene3D" id="3.40.1400.10">
    <property type="entry name" value="Sugar-phosphate isomerase, RpiB/LacA/LacB"/>
    <property type="match status" value="1"/>
</dbReference>
<dbReference type="InterPro" id="IPR003500">
    <property type="entry name" value="RpiB_LacA_LacB"/>
</dbReference>
<dbReference type="InterPro" id="IPR036569">
    <property type="entry name" value="RpiB_LacA_LacB_sf"/>
</dbReference>
<dbReference type="NCBIfam" id="TIGR00689">
    <property type="entry name" value="rpiB_lacA_lacB"/>
    <property type="match status" value="1"/>
</dbReference>
<dbReference type="PANTHER" id="PTHR30345:SF0">
    <property type="entry name" value="DNA DAMAGE-REPAIR_TOLERATION PROTEIN DRT102"/>
    <property type="match status" value="1"/>
</dbReference>
<dbReference type="PANTHER" id="PTHR30345">
    <property type="entry name" value="RIBOSE-5-PHOSPHATE ISOMERASE B"/>
    <property type="match status" value="1"/>
</dbReference>
<dbReference type="Pfam" id="PF02502">
    <property type="entry name" value="LacAB_rpiB"/>
    <property type="match status" value="1"/>
</dbReference>
<dbReference type="PIRSF" id="PIRSF005384">
    <property type="entry name" value="RpiB_LacA_B"/>
    <property type="match status" value="1"/>
</dbReference>
<dbReference type="SUPFAM" id="SSF89623">
    <property type="entry name" value="Ribose/Galactose isomerase RpiB/AlsB"/>
    <property type="match status" value="1"/>
</dbReference>
<evidence type="ECO:0000250" key="1">
    <source>
        <dbReference type="UniProtKB" id="P37351"/>
    </source>
</evidence>
<evidence type="ECO:0000269" key="2">
    <source ref="2"/>
</evidence>
<evidence type="ECO:0000303" key="3">
    <source ref="2"/>
</evidence>
<evidence type="ECO:0000305" key="4"/>
<evidence type="ECO:0000312" key="5">
    <source>
        <dbReference type="EMBL" id="EJF39089.1"/>
    </source>
</evidence>
<reference key="1">
    <citation type="submission" date="2012-05" db="EMBL/GenBank/DDBJ databases">
        <authorList>
            <person name="Harkins D.M."/>
            <person name="Madupu R."/>
            <person name="Durkin A.S."/>
            <person name="Torralba M."/>
            <person name="Methe B."/>
            <person name="Sutton G.G."/>
            <person name="Nelson K.E."/>
        </authorList>
    </citation>
    <scope>NUCLEOTIDE SEQUENCE [LARGE SCALE GENOMIC DNA]</scope>
    <source>
        <strain>MSTE9</strain>
    </source>
</reference>
<reference key="2">
    <citation type="journal article" date="2021" name="ACS Catal.">
        <title>Mechanistically diverse pathways for sulfoquinovose degradation in bacteria.</title>
        <authorList>
            <person name="Liu J."/>
            <person name="Wei Y."/>
            <person name="Ma K."/>
            <person name="An J."/>
            <person name="Liu X."/>
            <person name="Liu Y."/>
            <person name="Ang E.L."/>
            <person name="Zhao H."/>
            <person name="Zhang Y."/>
        </authorList>
    </citation>
    <scope>FUNCTION</scope>
    <scope>CATALYTIC ACTIVITY</scope>
    <source>
        <strain>MSTE9</strain>
    </source>
</reference>
<feature type="chain" id="PRO_0000458939" description="4-deoxy-4-sulfo-D-erythrose isomerase">
    <location>
        <begin position="1"/>
        <end position="159"/>
    </location>
</feature>
<feature type="active site" description="Proton acceptor" evidence="1">
    <location>
        <position position="66"/>
    </location>
</feature>
<organism>
    <name type="scientific">Clostridium sp. (strain MSTE9)</name>
    <dbReference type="NCBI Taxonomy" id="1105031"/>
    <lineage>
        <taxon>Bacteria</taxon>
        <taxon>Bacillati</taxon>
        <taxon>Bacillota</taxon>
        <taxon>Clostridia</taxon>
        <taxon>Eubacteriales</taxon>
        <taxon>Clostridiaceae</taxon>
        <taxon>Clostridium</taxon>
    </lineage>
</organism>
<proteinExistence type="evidence at protein level"/>
<keyword id="KW-0119">Carbohydrate metabolism</keyword>
<keyword id="KW-0413">Isomerase</keyword>
<keyword id="KW-1185">Reference proteome</keyword>
<accession>J0MXJ0</accession>
<name>SQWI_CLOS9</name>
<protein>
    <recommendedName>
        <fullName evidence="4">4-deoxy-4-sulfo-D-erythrose isomerase</fullName>
        <ecNumber evidence="2">5.3.1.37</ecNumber>
    </recommendedName>
    <alternativeName>
        <fullName evidence="3">SEu isomerase</fullName>
    </alternativeName>
</protein>